<evidence type="ECO:0000250" key="1"/>
<evidence type="ECO:0000255" key="2"/>
<evidence type="ECO:0000256" key="3">
    <source>
        <dbReference type="SAM" id="MobiDB-lite"/>
    </source>
</evidence>
<evidence type="ECO:0000305" key="4"/>
<accession>A3P6Z9</accession>
<proteinExistence type="inferred from homology"/>
<protein>
    <recommendedName>
        <fullName>Secretion apparatus protein BsaZ</fullName>
    </recommendedName>
</protein>
<comment type="function">
    <text evidence="1">Part of the bsa type III secretion system, is involved in the intracellular replication of invading bacteria inside the host cell. Probably necessary for the lysis of the vacuole membrane and escape into the host cell cytoplasm (By similarity).</text>
</comment>
<comment type="subcellular location">
    <subcellularLocation>
        <location evidence="4">Cell membrane</location>
        <topology evidence="4">Multi-pass membrane protein</topology>
    </subcellularLocation>
</comment>
<comment type="similarity">
    <text evidence="4">Belongs to the type III secretion exporter family.</text>
</comment>
<name>BSAZ_BURP0</name>
<dbReference type="EMBL" id="CP000573">
    <property type="protein sequence ID" value="ABN92817.1"/>
    <property type="molecule type" value="Genomic_DNA"/>
</dbReference>
<dbReference type="RefSeq" id="WP_004533159.1">
    <property type="nucleotide sequence ID" value="NC_009078.1"/>
</dbReference>
<dbReference type="SMR" id="A3P6Z9"/>
<dbReference type="GeneID" id="93063714"/>
<dbReference type="KEGG" id="bpl:BURPS1106A_A2076"/>
<dbReference type="HOGENOM" id="CLU_041013_1_3_4"/>
<dbReference type="Proteomes" id="UP000006738">
    <property type="component" value="Chromosome II"/>
</dbReference>
<dbReference type="GO" id="GO:0005886">
    <property type="term" value="C:plasma membrane"/>
    <property type="evidence" value="ECO:0007669"/>
    <property type="project" value="UniProtKB-SubCell"/>
</dbReference>
<dbReference type="GO" id="GO:0009306">
    <property type="term" value="P:protein secretion"/>
    <property type="evidence" value="ECO:0007669"/>
    <property type="project" value="InterPro"/>
</dbReference>
<dbReference type="Gene3D" id="6.10.250.2080">
    <property type="match status" value="1"/>
</dbReference>
<dbReference type="Gene3D" id="3.40.1690.10">
    <property type="entry name" value="secretion proteins EscU"/>
    <property type="match status" value="1"/>
</dbReference>
<dbReference type="InterPro" id="IPR006307">
    <property type="entry name" value="BsaZ-like"/>
</dbReference>
<dbReference type="InterPro" id="IPR006135">
    <property type="entry name" value="T3SS_substrate_exporter"/>
</dbReference>
<dbReference type="InterPro" id="IPR029025">
    <property type="entry name" value="T3SS_substrate_exporter_C"/>
</dbReference>
<dbReference type="NCBIfam" id="TIGR01404">
    <property type="entry name" value="FlhB_rel_III"/>
    <property type="match status" value="1"/>
</dbReference>
<dbReference type="NCBIfam" id="NF006017">
    <property type="entry name" value="PRK08156.1"/>
    <property type="match status" value="1"/>
</dbReference>
<dbReference type="PANTHER" id="PTHR30531">
    <property type="entry name" value="FLAGELLAR BIOSYNTHETIC PROTEIN FLHB"/>
    <property type="match status" value="1"/>
</dbReference>
<dbReference type="PANTHER" id="PTHR30531:SF14">
    <property type="entry name" value="SURFACE PRESENTATION OF ANTIGENS PROTEIN SPAS"/>
    <property type="match status" value="1"/>
</dbReference>
<dbReference type="Pfam" id="PF01312">
    <property type="entry name" value="Bac_export_2"/>
    <property type="match status" value="1"/>
</dbReference>
<dbReference type="PRINTS" id="PR00950">
    <property type="entry name" value="TYPE3IMSPROT"/>
</dbReference>
<dbReference type="SUPFAM" id="SSF160544">
    <property type="entry name" value="EscU C-terminal domain-like"/>
    <property type="match status" value="1"/>
</dbReference>
<feature type="chain" id="PRO_0000344015" description="Secretion apparatus protein BsaZ">
    <location>
        <begin position="1"/>
        <end position="411"/>
    </location>
</feature>
<feature type="transmembrane region" description="Helical" evidence="2">
    <location>
        <begin position="28"/>
        <end position="48"/>
    </location>
</feature>
<feature type="transmembrane region" description="Helical" evidence="2">
    <location>
        <begin position="80"/>
        <end position="100"/>
    </location>
</feature>
<feature type="transmembrane region" description="Helical" evidence="2">
    <location>
        <begin position="137"/>
        <end position="157"/>
    </location>
</feature>
<feature type="transmembrane region" description="Helical" evidence="2">
    <location>
        <begin position="175"/>
        <end position="195"/>
    </location>
</feature>
<feature type="region of interest" description="Disordered" evidence="3">
    <location>
        <begin position="341"/>
        <end position="411"/>
    </location>
</feature>
<feature type="compositionally biased region" description="Low complexity" evidence="3">
    <location>
        <begin position="370"/>
        <end position="404"/>
    </location>
</feature>
<organism>
    <name type="scientific">Burkholderia pseudomallei (strain 1106a)</name>
    <dbReference type="NCBI Taxonomy" id="357348"/>
    <lineage>
        <taxon>Bacteria</taxon>
        <taxon>Pseudomonadati</taxon>
        <taxon>Pseudomonadota</taxon>
        <taxon>Betaproteobacteria</taxon>
        <taxon>Burkholderiales</taxon>
        <taxon>Burkholderiaceae</taxon>
        <taxon>Burkholderia</taxon>
        <taxon>pseudomallei group</taxon>
    </lineage>
</organism>
<sequence>MAEKTEKPTAKKLRDAAKKGQTFKARDIVALIVIATGALAAPALVDLTRIAAEFVRIASTGAQPNPGAYAFAWAKLFLRIAAPFVLLCAAAGALPSLVQSRFTLAVESIRFDLTALDPVKGMKRLFSWRSAKDAVKALLYVGVFALTVRVFADLYHADVFGLFRARPALLGHMWIVLTVRLVLLFLLCALPVLILDAAVEYFLYHRELKMDKHEVKQEYKESEGNHEIKSKRREIHQELLSEEIKANVEQSDFIVANPTHIAIGVYVNPDIVPIPFVSVRETNARALAVIRHAEACGVPVVRNVALARSIYRNSPRRYSFVSHDDIDGVMRVLIWLGEVEAANRGGPPPETRAPTSAEPQARDGVAPPGDACADNAFPDDAPPGAAAPNAGSPDSPAPDGGAPARTGDQNA</sequence>
<reference key="1">
    <citation type="journal article" date="2010" name="Genome Biol. Evol.">
        <title>Continuing evolution of Burkholderia mallei through genome reduction and large-scale rearrangements.</title>
        <authorList>
            <person name="Losada L."/>
            <person name="Ronning C.M."/>
            <person name="DeShazer D."/>
            <person name="Woods D."/>
            <person name="Fedorova N."/>
            <person name="Kim H.S."/>
            <person name="Shabalina S.A."/>
            <person name="Pearson T.R."/>
            <person name="Brinkac L."/>
            <person name="Tan P."/>
            <person name="Nandi T."/>
            <person name="Crabtree J."/>
            <person name="Badger J."/>
            <person name="Beckstrom-Sternberg S."/>
            <person name="Saqib M."/>
            <person name="Schutzer S.E."/>
            <person name="Keim P."/>
            <person name="Nierman W.C."/>
        </authorList>
    </citation>
    <scope>NUCLEOTIDE SEQUENCE [LARGE SCALE GENOMIC DNA]</scope>
    <source>
        <strain>1106a</strain>
    </source>
</reference>
<keyword id="KW-1003">Cell membrane</keyword>
<keyword id="KW-0472">Membrane</keyword>
<keyword id="KW-0812">Transmembrane</keyword>
<keyword id="KW-1133">Transmembrane helix</keyword>
<keyword id="KW-0843">Virulence</keyword>
<gene>
    <name type="primary">bsaZ</name>
    <name type="ordered locus">BURPS1106A_A2076</name>
</gene>